<comment type="function">
    <text evidence="2">The steroid hormones and their receptors are involved in the regulation of eukaryotic gene expression and affect cellular proliferation and differentiation in target tissues. Transcriptional activator of several progesteron-dependent promoters in a variety of cell types. Involved in activation of SRC-dependent MAPK signaling on hormone stimulation.</text>
</comment>
<comment type="subunit">
    <text evidence="2 3">Interacts with SMARD1 and UNC45A. Interacts with CUEDC2; the interaction promotes ubiquitination, decreases sumoylation, and represses transcriptional activity. Interacts with PIAS3; the interaction promotes sumoylation of PR in a hormone-dependent manner, inhibits DNA-binding, and alters nuclear export. Interacts with SP1; the interaction requires ligand-induced phosphorylation on Ser-345 by ERK1/2-MAPK. Interacts with PRMT2. Interacts with NCOA2 and NCOA1. Interacts with KLF9. Interacts with GTF2B (By similarity).</text>
</comment>
<comment type="subcellular location">
    <subcellularLocation>
        <location>Nucleus</location>
    </subcellularLocation>
    <subcellularLocation>
        <location>Cytoplasm</location>
    </subcellularLocation>
    <text evidence="1">Nucleoplasmic shuttling is both hormone- and cell cycle-dependent. On hormone stimulation, retained in the cytoplasm in the G(1) and G(2)/M phases (By similarity).</text>
</comment>
<comment type="domain">
    <text>Composed of three domains: a modulating N-terminal domain, a DNA-binding domain and a C-terminal ligand-binding domain.</text>
</comment>
<comment type="PTM">
    <text evidence="1">Phosphorylated on multiple serine sites. Several of these sites are hormone-dependent. Phosphorylation on Ser-294 is highly hormone-dependent and modulates ubiquitination and sumoylation on Lys-388. Phosphorylation on Ser-345 also requires induction by hormone. Basal phosphorylation on Ser-162, Ser-190 and Ser-400 is increased in response to progesterone and can be phosphorylated in vitro by the CDK2-A1 complex. Increased levels of phosphorylation on Ser-400 also in the presence of EGF, heregulin, IGF, PMA and FBS. Phosphorylation at this site by CDK2 is ligand-independent, and increases nuclear translocation and transcriptional activity. Phosphorylation at Ser-162 and Ser-294, but not at Ser-190, is impaired during the G(2)/M phase of the cell cycle. Phosphorylation on Ser-345 by ERK1/2 MAPK is required for interaction with SP1 (By similarity).</text>
</comment>
<comment type="PTM">
    <text evidence="1">Sumoylation is hormone-dependent and represses transcriptional activity. Sumoylation on all three sites is enhanced by PIAS3. Desumoylated by SENP1. Sumoylation on Lys-388, the main site of sumoylation, is repressed by ubiquitination on the same site, and modulated by phosphorylation at Ser-294 (By similarity).</text>
</comment>
<comment type="PTM">
    <text evidence="2">Ubiquitination is hormone-dependent and represses sumoylation on the same site (By similarity). Promoted by MAPK-mediated phosphorylation on Ser-294 (By similarity). Ubiquitinated by UBR5, leading to its degradation: UBR5 specifically recognizes and binds ligand-bound PGR when it is not associated with coactivators (NCOAs) (By similarity). In presence of NCOAs, the UBR5-degron is not accessible, preventing its ubiquitination and degradation (By similarity).</text>
</comment>
<comment type="PTM">
    <text evidence="1">Palmitoylated by ZDHHC7 and ZDHHC21. Palmitoylation is required for plasma membrane targeting and for rapid intracellular signaling via ERK and AKT kinases and cAMP generation (By similarity).</text>
</comment>
<comment type="similarity">
    <text evidence="8">Belongs to the nuclear hormone receptor family.</text>
</comment>
<dbReference type="EMBL" id="DQ234987">
    <property type="protein sequence ID" value="ABB72147.1"/>
    <property type="molecule type" value="Genomic_DNA"/>
</dbReference>
<dbReference type="GO" id="GO:0005737">
    <property type="term" value="C:cytoplasm"/>
    <property type="evidence" value="ECO:0007669"/>
    <property type="project" value="UniProtKB-SubCell"/>
</dbReference>
<dbReference type="GO" id="GO:0005654">
    <property type="term" value="C:nucleoplasm"/>
    <property type="evidence" value="ECO:0007669"/>
    <property type="project" value="UniProtKB-ARBA"/>
</dbReference>
<dbReference type="GO" id="GO:0003707">
    <property type="term" value="F:nuclear steroid receptor activity"/>
    <property type="evidence" value="ECO:0007669"/>
    <property type="project" value="InterPro"/>
</dbReference>
<dbReference type="GO" id="GO:0043565">
    <property type="term" value="F:sequence-specific DNA binding"/>
    <property type="evidence" value="ECO:0007669"/>
    <property type="project" value="InterPro"/>
</dbReference>
<dbReference type="GO" id="GO:0005496">
    <property type="term" value="F:steroid binding"/>
    <property type="evidence" value="ECO:0007669"/>
    <property type="project" value="UniProtKB-KW"/>
</dbReference>
<dbReference type="GO" id="GO:0008270">
    <property type="term" value="F:zinc ion binding"/>
    <property type="evidence" value="ECO:0007669"/>
    <property type="project" value="UniProtKB-KW"/>
</dbReference>
<dbReference type="CDD" id="cd07172">
    <property type="entry name" value="NR_DBD_GR_PR"/>
    <property type="match status" value="1"/>
</dbReference>
<dbReference type="CDD" id="cd07074">
    <property type="entry name" value="NR_LBD_PR"/>
    <property type="match status" value="1"/>
</dbReference>
<dbReference type="FunFam" id="1.10.565.10:FF:000004">
    <property type="entry name" value="Androgen receptor variant"/>
    <property type="match status" value="1"/>
</dbReference>
<dbReference type="FunFam" id="3.30.50.10:FF:000027">
    <property type="entry name" value="Progesterone receptor"/>
    <property type="match status" value="1"/>
</dbReference>
<dbReference type="Gene3D" id="3.30.50.10">
    <property type="entry name" value="Erythroid Transcription Factor GATA-1, subunit A"/>
    <property type="match status" value="1"/>
</dbReference>
<dbReference type="Gene3D" id="1.10.565.10">
    <property type="entry name" value="Retinoid X Receptor"/>
    <property type="match status" value="1"/>
</dbReference>
<dbReference type="InterPro" id="IPR035500">
    <property type="entry name" value="NHR-like_dom_sf"/>
</dbReference>
<dbReference type="InterPro" id="IPR000536">
    <property type="entry name" value="Nucl_hrmn_rcpt_lig-bd"/>
</dbReference>
<dbReference type="InterPro" id="IPR050200">
    <property type="entry name" value="Nuclear_hormone_rcpt_NR3"/>
</dbReference>
<dbReference type="InterPro" id="IPR001723">
    <property type="entry name" value="Nuclear_hrmn_rcpt"/>
</dbReference>
<dbReference type="InterPro" id="IPR000128">
    <property type="entry name" value="Progest_rcpt"/>
</dbReference>
<dbReference type="InterPro" id="IPR001628">
    <property type="entry name" value="Znf_hrmn_rcpt"/>
</dbReference>
<dbReference type="InterPro" id="IPR013088">
    <property type="entry name" value="Znf_NHR/GATA"/>
</dbReference>
<dbReference type="PANTHER" id="PTHR48092">
    <property type="entry name" value="KNIRPS-RELATED PROTEIN-RELATED"/>
    <property type="match status" value="1"/>
</dbReference>
<dbReference type="Pfam" id="PF00104">
    <property type="entry name" value="Hormone_recep"/>
    <property type="match status" value="1"/>
</dbReference>
<dbReference type="Pfam" id="PF02161">
    <property type="entry name" value="Prog_receptor"/>
    <property type="match status" value="1"/>
</dbReference>
<dbReference type="Pfam" id="PF00105">
    <property type="entry name" value="zf-C4"/>
    <property type="match status" value="1"/>
</dbReference>
<dbReference type="PRINTS" id="PR00544">
    <property type="entry name" value="PROGESTRONER"/>
</dbReference>
<dbReference type="PRINTS" id="PR00398">
    <property type="entry name" value="STRDHORMONER"/>
</dbReference>
<dbReference type="PRINTS" id="PR00047">
    <property type="entry name" value="STROIDFINGER"/>
</dbReference>
<dbReference type="SMART" id="SM00430">
    <property type="entry name" value="HOLI"/>
    <property type="match status" value="1"/>
</dbReference>
<dbReference type="SMART" id="SM00399">
    <property type="entry name" value="ZnF_C4"/>
    <property type="match status" value="1"/>
</dbReference>
<dbReference type="SUPFAM" id="SSF57716">
    <property type="entry name" value="Glucocorticoid receptor-like (DNA-binding domain)"/>
    <property type="match status" value="1"/>
</dbReference>
<dbReference type="SUPFAM" id="SSF48508">
    <property type="entry name" value="Nuclear receptor ligand-binding domain"/>
    <property type="match status" value="1"/>
</dbReference>
<dbReference type="PROSITE" id="PS51843">
    <property type="entry name" value="NR_LBD"/>
    <property type="match status" value="1"/>
</dbReference>
<dbReference type="PROSITE" id="PS00031">
    <property type="entry name" value="NUCLEAR_REC_DBD_1"/>
    <property type="match status" value="1"/>
</dbReference>
<dbReference type="PROSITE" id="PS51030">
    <property type="entry name" value="NUCLEAR_REC_DBD_2"/>
    <property type="match status" value="1"/>
</dbReference>
<organism>
    <name type="scientific">Chlorocebus aethiops</name>
    <name type="common">Green monkey</name>
    <name type="synonym">Cercopithecus aethiops</name>
    <dbReference type="NCBI Taxonomy" id="9534"/>
    <lineage>
        <taxon>Eukaryota</taxon>
        <taxon>Metazoa</taxon>
        <taxon>Chordata</taxon>
        <taxon>Craniata</taxon>
        <taxon>Vertebrata</taxon>
        <taxon>Euteleostomi</taxon>
        <taxon>Mammalia</taxon>
        <taxon>Eutheria</taxon>
        <taxon>Euarchontoglires</taxon>
        <taxon>Primates</taxon>
        <taxon>Haplorrhini</taxon>
        <taxon>Catarrhini</taxon>
        <taxon>Cercopithecidae</taxon>
        <taxon>Cercopithecinae</taxon>
        <taxon>Chlorocebus</taxon>
    </lineage>
</organism>
<gene>
    <name type="primary">PGR</name>
    <name type="synonym">NR3C3</name>
</gene>
<feature type="chain" id="PRO_0000375852" description="Progesterone receptor">
    <location>
        <begin position="1"/>
        <end position="933"/>
    </location>
</feature>
<feature type="domain" description="NR LBD" evidence="6">
    <location>
        <begin position="679"/>
        <end position="913"/>
    </location>
</feature>
<feature type="DNA-binding region" description="Nuclear receptor" evidence="5">
    <location>
        <begin position="567"/>
        <end position="639"/>
    </location>
</feature>
<feature type="zinc finger region" description="NR C4-type" evidence="5">
    <location>
        <begin position="567"/>
        <end position="587"/>
    </location>
</feature>
<feature type="zinc finger region" description="NR C4-type" evidence="5">
    <location>
        <begin position="603"/>
        <end position="627"/>
    </location>
</feature>
<feature type="region of interest" description="Modulating, Pro-Rich">
    <location>
        <begin position="1"/>
        <end position="566"/>
    </location>
</feature>
<feature type="region of interest" description="Disordered" evidence="7">
    <location>
        <begin position="1"/>
        <end position="256"/>
    </location>
</feature>
<feature type="region of interest" description="AF3; mediates transcriptional activation" evidence="2">
    <location>
        <begin position="1"/>
        <end position="164"/>
    </location>
</feature>
<feature type="region of interest" description="Mediates transcriptional transrepression" evidence="2">
    <location>
        <begin position="165"/>
        <end position="305"/>
    </location>
</feature>
<feature type="region of interest" description="Disordered" evidence="7">
    <location>
        <begin position="332"/>
        <end position="380"/>
    </location>
</feature>
<feature type="region of interest" description="Disordered" evidence="7">
    <location>
        <begin position="415"/>
        <end position="454"/>
    </location>
</feature>
<feature type="region of interest" description="AF1; mediates transcriptional activation" evidence="2">
    <location>
        <begin position="456"/>
        <end position="546"/>
    </location>
</feature>
<feature type="region of interest" description="AF2; mediates transcriptional activation" evidence="2">
    <location>
        <begin position="687"/>
        <end position="933"/>
    </location>
</feature>
<feature type="short sequence motif" description="LXXL motif 1" evidence="2">
    <location>
        <begin position="55"/>
        <end position="59"/>
    </location>
</feature>
<feature type="short sequence motif" description="LXXL motif 2" evidence="2">
    <location>
        <begin position="115"/>
        <end position="119"/>
    </location>
</feature>
<feature type="short sequence motif" description="Nuclear localization signal" evidence="4">
    <location>
        <begin position="183"/>
        <end position="187"/>
    </location>
</feature>
<feature type="compositionally biased region" description="Acidic residues" evidence="7">
    <location>
        <begin position="220"/>
        <end position="231"/>
    </location>
</feature>
<feature type="compositionally biased region" description="Low complexity" evidence="7">
    <location>
        <begin position="335"/>
        <end position="350"/>
    </location>
</feature>
<feature type="compositionally biased region" description="Pro residues" evidence="7">
    <location>
        <begin position="418"/>
        <end position="433"/>
    </location>
</feature>
<feature type="compositionally biased region" description="Low complexity" evidence="7">
    <location>
        <begin position="434"/>
        <end position="454"/>
    </location>
</feature>
<feature type="binding site" evidence="2">
    <location>
        <position position="766"/>
    </location>
    <ligand>
        <name>progesterone</name>
        <dbReference type="ChEBI" id="CHEBI:17026"/>
    </ligand>
</feature>
<feature type="modified residue" description="Phosphoserine" evidence="2">
    <location>
        <position position="20"/>
    </location>
</feature>
<feature type="modified residue" description="Phosphoserine" evidence="2">
    <location>
        <position position="130"/>
    </location>
</feature>
<feature type="modified residue" description="Phosphoserine" evidence="2">
    <location>
        <position position="162"/>
    </location>
</feature>
<feature type="modified residue" description="Phosphoserine" evidence="2">
    <location>
        <position position="190"/>
    </location>
</feature>
<feature type="modified residue" description="Phosphoserine" evidence="2">
    <location>
        <position position="213"/>
    </location>
</feature>
<feature type="modified residue" description="Phosphoserine; by MAPK1" evidence="2">
    <location>
        <position position="294"/>
    </location>
</feature>
<feature type="modified residue" description="Phosphoserine; by MAPK" evidence="2">
    <location>
        <position position="345"/>
    </location>
</feature>
<feature type="modified residue" description="Phosphoserine; by CDK2" evidence="2">
    <location>
        <position position="400"/>
    </location>
</feature>
<feature type="modified residue" description="Phosphoserine" evidence="2">
    <location>
        <position position="676"/>
    </location>
</feature>
<feature type="cross-link" description="Glycyl lysine isopeptide (Lys-Gly) (interchain with G-Cter in SUMO); alternate" evidence="1">
    <location>
        <position position="388"/>
    </location>
</feature>
<feature type="cross-link" description="Glycyl lysine isopeptide (Lys-Gly) (interchain with G-Cter in ubiquitin); alternate" evidence="2">
    <location>
        <position position="388"/>
    </location>
</feature>
<feature type="cross-link" description="Glycyl lysine isopeptide (Lys-Gly) (interchain with G-Cter in SUMO)" evidence="1">
    <location>
        <position position="531"/>
    </location>
</feature>
<accession>A7X8C9</accession>
<reference key="1">
    <citation type="journal article" date="2008" name="Mol. Phylogenet. Evol.">
        <title>The human progesterone receptor shows evidence of adaptive evolution associated with its ability to act as a transcription factor.</title>
        <authorList>
            <person name="Chen C."/>
            <person name="Opazo J.C."/>
            <person name="Erez O."/>
            <person name="Uddin M."/>
            <person name="Santolaya-Forgas J."/>
            <person name="Goodman M."/>
            <person name="Grossman L.I."/>
            <person name="Romero R."/>
            <person name="Wildman D.E."/>
        </authorList>
    </citation>
    <scope>NUCLEOTIDE SEQUENCE [GENOMIC DNA]</scope>
</reference>
<evidence type="ECO:0000250" key="1"/>
<evidence type="ECO:0000250" key="2">
    <source>
        <dbReference type="UniProtKB" id="P06401"/>
    </source>
</evidence>
<evidence type="ECO:0000250" key="3">
    <source>
        <dbReference type="UniProtKB" id="Q00175"/>
    </source>
</evidence>
<evidence type="ECO:0000255" key="4"/>
<evidence type="ECO:0000255" key="5">
    <source>
        <dbReference type="PROSITE-ProRule" id="PRU00407"/>
    </source>
</evidence>
<evidence type="ECO:0000255" key="6">
    <source>
        <dbReference type="PROSITE-ProRule" id="PRU01189"/>
    </source>
</evidence>
<evidence type="ECO:0000256" key="7">
    <source>
        <dbReference type="SAM" id="MobiDB-lite"/>
    </source>
</evidence>
<evidence type="ECO:0000305" key="8"/>
<proteinExistence type="inferred from homology"/>
<keyword id="KW-0963">Cytoplasm</keyword>
<keyword id="KW-0238">DNA-binding</keyword>
<keyword id="KW-1017">Isopeptide bond</keyword>
<keyword id="KW-0446">Lipid-binding</keyword>
<keyword id="KW-0449">Lipoprotein</keyword>
<keyword id="KW-0479">Metal-binding</keyword>
<keyword id="KW-0539">Nucleus</keyword>
<keyword id="KW-0564">Palmitate</keyword>
<keyword id="KW-0597">Phosphoprotein</keyword>
<keyword id="KW-0675">Receptor</keyword>
<keyword id="KW-0754">Steroid-binding</keyword>
<keyword id="KW-0804">Transcription</keyword>
<keyword id="KW-0805">Transcription regulation</keyword>
<keyword id="KW-0832">Ubl conjugation</keyword>
<keyword id="KW-0862">Zinc</keyword>
<keyword id="KW-0863">Zinc-finger</keyword>
<protein>
    <recommendedName>
        <fullName>Progesterone receptor</fullName>
        <shortName>PR</shortName>
    </recommendedName>
    <alternativeName>
        <fullName>Nuclear receptor subfamily 3 group C member 3</fullName>
    </alternativeName>
</protein>
<name>PRGR_CHLAE</name>
<sequence>MTELKAKGPRAPHVAGGPPSPEVGSPLLXRPAAGPFQGSQTSDTLPEVPAIPISLDGLLFPRPCQGQDPLDEKTQDQQSLTDVEGAYSRAEATRGTGGSSSRPPEKDSGLLDSVLDTLLAPSGPGQSQPSPPACEVTSSWCLFGPELPEDPPAAPATQRVLSPLMSRSGGKAGDSSGTAAAHKVLPRGLSPSRQLLLPASGSPHWSGVPVKPSPQPTAVEVEEEDGSESEDSAGPLLKGNPRALGGAAAGGGAAAVPPGAAAGGVALVPKEDSRFSAPRVALVEQDAPMAPGRSPLATTTMDFIHVPIRPLNHALLAARTRHLLEEESYDGGAGAASAFAPPRSSPSASSTPVAVGDFPDCAYPPDADPKDDAYPLYGDFQPPALKIKEEEEGAEASARSPRSYLVAGANPAAFPDFPLGPPPPLPPRAPPSRPGEAAVTAAPASASVSSSSSSGSTLECILYKAEGAPPQQGPFAPPPCKAPGAGGCLLPRDGLPSTSASAAXAGAAPALYPALGLNGLPQLGYQAAVLKEGLQQVYPPYLNYLRPDSEASQSPQYSFESLPQKICLICGDEASGCHYGVLTCGSCKVFFKRAMEGQHNYLCAGRNDCIVDKIRRKNCPACRLRKCCQAGMVLGGRKFKKFNKVRVMRALDAVALPQPVGIPNESQALSQRFTFSPGQDIQFFPPLINLLVSIEPDVIYAGHDNSKPDTSSSLLTSLNQLGERQLLSVVKWSKSLPGFRNLHIDDQITLIQYSWMSLMVFGLGWRSYKHVSGQMLYFAPDLILNEQRMKESSFYSLCLTMWQIPQEFVKLQVSQEEFLCMKVLLLLNTIPLEGLRSQTQFEEMRSSYIRELIKAIGLRQKGVVSSSQRFYQLTKLLDNLHDLVKQLHLYCLNTFIQSRALSVEFPEMMSEVIAAQLPKILAGMVKPLLFHKK</sequence>